<gene>
    <name evidence="1" type="primary">rpsM</name>
    <name type="ordered locus">KPK_0419</name>
</gene>
<accession>B5XNB4</accession>
<feature type="chain" id="PRO_1000141274" description="Small ribosomal subunit protein uS13">
    <location>
        <begin position="1"/>
        <end position="118"/>
    </location>
</feature>
<feature type="region of interest" description="Disordered" evidence="2">
    <location>
        <begin position="94"/>
        <end position="118"/>
    </location>
</feature>
<sequence length="118" mass="13211">MARIAGINIPDHKHTVIALTAIFGIGKTRSKAICAETGIAENVKISELSEEQIDILREAVGKFVVEGDLRREITLSIKRLMDLGCYRGLRHRRGLPVRGQRTKTNARTRKGPRKPIKK</sequence>
<reference key="1">
    <citation type="journal article" date="2008" name="PLoS Genet.">
        <title>Complete genome sequence of the N2-fixing broad host range endophyte Klebsiella pneumoniae 342 and virulence predictions verified in mice.</title>
        <authorList>
            <person name="Fouts D.E."/>
            <person name="Tyler H.L."/>
            <person name="DeBoy R.T."/>
            <person name="Daugherty S."/>
            <person name="Ren Q."/>
            <person name="Badger J.H."/>
            <person name="Durkin A.S."/>
            <person name="Huot H."/>
            <person name="Shrivastava S."/>
            <person name="Kothari S."/>
            <person name="Dodson R.J."/>
            <person name="Mohamoud Y."/>
            <person name="Khouri H."/>
            <person name="Roesch L.F.W."/>
            <person name="Krogfelt K.A."/>
            <person name="Struve C."/>
            <person name="Triplett E.W."/>
            <person name="Methe B.A."/>
        </authorList>
    </citation>
    <scope>NUCLEOTIDE SEQUENCE [LARGE SCALE GENOMIC DNA]</scope>
    <source>
        <strain>342</strain>
    </source>
</reference>
<dbReference type="EMBL" id="CP000964">
    <property type="protein sequence ID" value="ACI08675.1"/>
    <property type="molecule type" value="Genomic_DNA"/>
</dbReference>
<dbReference type="SMR" id="B5XNB4"/>
<dbReference type="KEGG" id="kpe:KPK_0419"/>
<dbReference type="HOGENOM" id="CLU_103849_1_2_6"/>
<dbReference type="Proteomes" id="UP000001734">
    <property type="component" value="Chromosome"/>
</dbReference>
<dbReference type="GO" id="GO:0005829">
    <property type="term" value="C:cytosol"/>
    <property type="evidence" value="ECO:0007669"/>
    <property type="project" value="TreeGrafter"/>
</dbReference>
<dbReference type="GO" id="GO:0015935">
    <property type="term" value="C:small ribosomal subunit"/>
    <property type="evidence" value="ECO:0007669"/>
    <property type="project" value="TreeGrafter"/>
</dbReference>
<dbReference type="GO" id="GO:0019843">
    <property type="term" value="F:rRNA binding"/>
    <property type="evidence" value="ECO:0007669"/>
    <property type="project" value="UniProtKB-UniRule"/>
</dbReference>
<dbReference type="GO" id="GO:0003735">
    <property type="term" value="F:structural constituent of ribosome"/>
    <property type="evidence" value="ECO:0007669"/>
    <property type="project" value="InterPro"/>
</dbReference>
<dbReference type="GO" id="GO:0000049">
    <property type="term" value="F:tRNA binding"/>
    <property type="evidence" value="ECO:0007669"/>
    <property type="project" value="UniProtKB-UniRule"/>
</dbReference>
<dbReference type="GO" id="GO:0006412">
    <property type="term" value="P:translation"/>
    <property type="evidence" value="ECO:0007669"/>
    <property type="project" value="UniProtKB-UniRule"/>
</dbReference>
<dbReference type="FunFam" id="1.10.8.50:FF:000001">
    <property type="entry name" value="30S ribosomal protein S13"/>
    <property type="match status" value="1"/>
</dbReference>
<dbReference type="FunFam" id="4.10.910.10:FF:000001">
    <property type="entry name" value="30S ribosomal protein S13"/>
    <property type="match status" value="1"/>
</dbReference>
<dbReference type="Gene3D" id="1.10.8.50">
    <property type="match status" value="1"/>
</dbReference>
<dbReference type="Gene3D" id="4.10.910.10">
    <property type="entry name" value="30s ribosomal protein s13, domain 2"/>
    <property type="match status" value="1"/>
</dbReference>
<dbReference type="HAMAP" id="MF_01315">
    <property type="entry name" value="Ribosomal_uS13"/>
    <property type="match status" value="1"/>
</dbReference>
<dbReference type="InterPro" id="IPR027437">
    <property type="entry name" value="Rbsml_uS13_C"/>
</dbReference>
<dbReference type="InterPro" id="IPR001892">
    <property type="entry name" value="Ribosomal_uS13"/>
</dbReference>
<dbReference type="InterPro" id="IPR010979">
    <property type="entry name" value="Ribosomal_uS13-like_H2TH"/>
</dbReference>
<dbReference type="InterPro" id="IPR019980">
    <property type="entry name" value="Ribosomal_uS13_bac-type"/>
</dbReference>
<dbReference type="InterPro" id="IPR018269">
    <property type="entry name" value="Ribosomal_uS13_CS"/>
</dbReference>
<dbReference type="NCBIfam" id="TIGR03631">
    <property type="entry name" value="uS13_bact"/>
    <property type="match status" value="1"/>
</dbReference>
<dbReference type="PANTHER" id="PTHR10871">
    <property type="entry name" value="30S RIBOSOMAL PROTEIN S13/40S RIBOSOMAL PROTEIN S18"/>
    <property type="match status" value="1"/>
</dbReference>
<dbReference type="PANTHER" id="PTHR10871:SF1">
    <property type="entry name" value="SMALL RIBOSOMAL SUBUNIT PROTEIN US13M"/>
    <property type="match status" value="1"/>
</dbReference>
<dbReference type="Pfam" id="PF00416">
    <property type="entry name" value="Ribosomal_S13"/>
    <property type="match status" value="1"/>
</dbReference>
<dbReference type="PIRSF" id="PIRSF002134">
    <property type="entry name" value="Ribosomal_S13"/>
    <property type="match status" value="1"/>
</dbReference>
<dbReference type="SUPFAM" id="SSF46946">
    <property type="entry name" value="S13-like H2TH domain"/>
    <property type="match status" value="1"/>
</dbReference>
<dbReference type="PROSITE" id="PS00646">
    <property type="entry name" value="RIBOSOMAL_S13_1"/>
    <property type="match status" value="1"/>
</dbReference>
<dbReference type="PROSITE" id="PS50159">
    <property type="entry name" value="RIBOSOMAL_S13_2"/>
    <property type="match status" value="1"/>
</dbReference>
<protein>
    <recommendedName>
        <fullName evidence="1">Small ribosomal subunit protein uS13</fullName>
    </recommendedName>
    <alternativeName>
        <fullName evidence="3">30S ribosomal protein S13</fullName>
    </alternativeName>
</protein>
<keyword id="KW-0687">Ribonucleoprotein</keyword>
<keyword id="KW-0689">Ribosomal protein</keyword>
<keyword id="KW-0694">RNA-binding</keyword>
<keyword id="KW-0699">rRNA-binding</keyword>
<keyword id="KW-0820">tRNA-binding</keyword>
<comment type="function">
    <text evidence="1">Located at the top of the head of the 30S subunit, it contacts several helices of the 16S rRNA. In the 70S ribosome it contacts the 23S rRNA (bridge B1a) and protein L5 of the 50S subunit (bridge B1b), connecting the 2 subunits; these bridges are implicated in subunit movement. Contacts the tRNAs in the A and P-sites.</text>
</comment>
<comment type="subunit">
    <text evidence="1">Part of the 30S ribosomal subunit. Forms a loose heterodimer with protein S19. Forms two bridges to the 50S subunit in the 70S ribosome.</text>
</comment>
<comment type="similarity">
    <text evidence="1">Belongs to the universal ribosomal protein uS13 family.</text>
</comment>
<evidence type="ECO:0000255" key="1">
    <source>
        <dbReference type="HAMAP-Rule" id="MF_01315"/>
    </source>
</evidence>
<evidence type="ECO:0000256" key="2">
    <source>
        <dbReference type="SAM" id="MobiDB-lite"/>
    </source>
</evidence>
<evidence type="ECO:0000305" key="3"/>
<organism>
    <name type="scientific">Klebsiella pneumoniae (strain 342)</name>
    <dbReference type="NCBI Taxonomy" id="507522"/>
    <lineage>
        <taxon>Bacteria</taxon>
        <taxon>Pseudomonadati</taxon>
        <taxon>Pseudomonadota</taxon>
        <taxon>Gammaproteobacteria</taxon>
        <taxon>Enterobacterales</taxon>
        <taxon>Enterobacteriaceae</taxon>
        <taxon>Klebsiella/Raoultella group</taxon>
        <taxon>Klebsiella</taxon>
        <taxon>Klebsiella pneumoniae complex</taxon>
    </lineage>
</organism>
<proteinExistence type="inferred from homology"/>
<name>RS13_KLEP3</name>